<keyword id="KW-0067">ATP-binding</keyword>
<keyword id="KW-0963">Cytoplasm</keyword>
<keyword id="KW-0227">DNA damage</keyword>
<keyword id="KW-0233">DNA recombination</keyword>
<keyword id="KW-0234">DNA repair</keyword>
<keyword id="KW-0238">DNA-binding</keyword>
<keyword id="KW-0547">Nucleotide-binding</keyword>
<keyword id="KW-1185">Reference proteome</keyword>
<keyword id="KW-0742">SOS response</keyword>
<reference key="1">
    <citation type="journal article" date="2007" name="Genome Res.">
        <title>Genome characteristics of facultatively symbiotic Frankia sp. strains reflect host range and host plant biogeography.</title>
        <authorList>
            <person name="Normand P."/>
            <person name="Lapierre P."/>
            <person name="Tisa L.S."/>
            <person name="Gogarten J.P."/>
            <person name="Alloisio N."/>
            <person name="Bagnarol E."/>
            <person name="Bassi C.A."/>
            <person name="Berry A.M."/>
            <person name="Bickhart D.M."/>
            <person name="Choisne N."/>
            <person name="Couloux A."/>
            <person name="Cournoyer B."/>
            <person name="Cruveiller S."/>
            <person name="Daubin V."/>
            <person name="Demange N."/>
            <person name="Francino M.P."/>
            <person name="Goltsman E."/>
            <person name="Huang Y."/>
            <person name="Kopp O.R."/>
            <person name="Labarre L."/>
            <person name="Lapidus A."/>
            <person name="Lavire C."/>
            <person name="Marechal J."/>
            <person name="Martinez M."/>
            <person name="Mastronunzio J.E."/>
            <person name="Mullin B.C."/>
            <person name="Niemann J."/>
            <person name="Pujic P."/>
            <person name="Rawnsley T."/>
            <person name="Rouy Z."/>
            <person name="Schenowitz C."/>
            <person name="Sellstedt A."/>
            <person name="Tavares F."/>
            <person name="Tomkins J.P."/>
            <person name="Vallenet D."/>
            <person name="Valverde C."/>
            <person name="Wall L.G."/>
            <person name="Wang Y."/>
            <person name="Medigue C."/>
            <person name="Benson D.R."/>
        </authorList>
    </citation>
    <scope>NUCLEOTIDE SEQUENCE [LARGE SCALE GENOMIC DNA]</scope>
    <source>
        <strain>DSM 45818 / CECT 9043 / HFP020203 / CcI3</strain>
    </source>
</reference>
<gene>
    <name evidence="1" type="primary">recA</name>
    <name type="ordered locus">Francci3_3525</name>
</gene>
<proteinExistence type="inferred from homology"/>
<dbReference type="EMBL" id="CP000249">
    <property type="protein sequence ID" value="ABD12878.1"/>
    <property type="molecule type" value="Genomic_DNA"/>
</dbReference>
<dbReference type="RefSeq" id="WP_011437903.1">
    <property type="nucleotide sequence ID" value="NZ_JENI01000013.1"/>
</dbReference>
<dbReference type="SMR" id="Q2J764"/>
<dbReference type="STRING" id="106370.Francci3_3525"/>
<dbReference type="KEGG" id="fra:Francci3_3525"/>
<dbReference type="eggNOG" id="COG0468">
    <property type="taxonomic scope" value="Bacteria"/>
</dbReference>
<dbReference type="HOGENOM" id="CLU_040469_3_2_11"/>
<dbReference type="OrthoDB" id="9776733at2"/>
<dbReference type="PhylomeDB" id="Q2J764"/>
<dbReference type="Proteomes" id="UP000001937">
    <property type="component" value="Chromosome"/>
</dbReference>
<dbReference type="GO" id="GO:0005829">
    <property type="term" value="C:cytosol"/>
    <property type="evidence" value="ECO:0007669"/>
    <property type="project" value="TreeGrafter"/>
</dbReference>
<dbReference type="GO" id="GO:0005524">
    <property type="term" value="F:ATP binding"/>
    <property type="evidence" value="ECO:0007669"/>
    <property type="project" value="UniProtKB-UniRule"/>
</dbReference>
<dbReference type="GO" id="GO:0016887">
    <property type="term" value="F:ATP hydrolysis activity"/>
    <property type="evidence" value="ECO:0007669"/>
    <property type="project" value="InterPro"/>
</dbReference>
<dbReference type="GO" id="GO:0140664">
    <property type="term" value="F:ATP-dependent DNA damage sensor activity"/>
    <property type="evidence" value="ECO:0007669"/>
    <property type="project" value="InterPro"/>
</dbReference>
<dbReference type="GO" id="GO:0003684">
    <property type="term" value="F:damaged DNA binding"/>
    <property type="evidence" value="ECO:0007669"/>
    <property type="project" value="UniProtKB-UniRule"/>
</dbReference>
<dbReference type="GO" id="GO:0003697">
    <property type="term" value="F:single-stranded DNA binding"/>
    <property type="evidence" value="ECO:0007669"/>
    <property type="project" value="UniProtKB-UniRule"/>
</dbReference>
<dbReference type="GO" id="GO:0006310">
    <property type="term" value="P:DNA recombination"/>
    <property type="evidence" value="ECO:0007669"/>
    <property type="project" value="UniProtKB-UniRule"/>
</dbReference>
<dbReference type="GO" id="GO:0006281">
    <property type="term" value="P:DNA repair"/>
    <property type="evidence" value="ECO:0007669"/>
    <property type="project" value="UniProtKB-UniRule"/>
</dbReference>
<dbReference type="GO" id="GO:0009432">
    <property type="term" value="P:SOS response"/>
    <property type="evidence" value="ECO:0007669"/>
    <property type="project" value="UniProtKB-UniRule"/>
</dbReference>
<dbReference type="CDD" id="cd00983">
    <property type="entry name" value="RecA"/>
    <property type="match status" value="1"/>
</dbReference>
<dbReference type="FunFam" id="3.40.50.300:FF:000087">
    <property type="entry name" value="Recombinase RecA"/>
    <property type="match status" value="1"/>
</dbReference>
<dbReference type="Gene3D" id="3.40.50.300">
    <property type="entry name" value="P-loop containing nucleotide triphosphate hydrolases"/>
    <property type="match status" value="1"/>
</dbReference>
<dbReference type="HAMAP" id="MF_00268">
    <property type="entry name" value="RecA"/>
    <property type="match status" value="1"/>
</dbReference>
<dbReference type="InterPro" id="IPR003593">
    <property type="entry name" value="AAA+_ATPase"/>
</dbReference>
<dbReference type="InterPro" id="IPR013765">
    <property type="entry name" value="DNA_recomb/repair_RecA"/>
</dbReference>
<dbReference type="InterPro" id="IPR020584">
    <property type="entry name" value="DNA_recomb/repair_RecA_CS"/>
</dbReference>
<dbReference type="InterPro" id="IPR027417">
    <property type="entry name" value="P-loop_NTPase"/>
</dbReference>
<dbReference type="InterPro" id="IPR049261">
    <property type="entry name" value="RecA-like_C"/>
</dbReference>
<dbReference type="InterPro" id="IPR049428">
    <property type="entry name" value="RecA-like_N"/>
</dbReference>
<dbReference type="InterPro" id="IPR020588">
    <property type="entry name" value="RecA_ATP-bd"/>
</dbReference>
<dbReference type="InterPro" id="IPR023400">
    <property type="entry name" value="RecA_C_sf"/>
</dbReference>
<dbReference type="InterPro" id="IPR020587">
    <property type="entry name" value="RecA_monomer-monomer_interface"/>
</dbReference>
<dbReference type="NCBIfam" id="TIGR02012">
    <property type="entry name" value="tigrfam_recA"/>
    <property type="match status" value="1"/>
</dbReference>
<dbReference type="PANTHER" id="PTHR45900:SF1">
    <property type="entry name" value="MITOCHONDRIAL DNA REPAIR PROTEIN RECA HOMOLOG-RELATED"/>
    <property type="match status" value="1"/>
</dbReference>
<dbReference type="PANTHER" id="PTHR45900">
    <property type="entry name" value="RECA"/>
    <property type="match status" value="1"/>
</dbReference>
<dbReference type="Pfam" id="PF00154">
    <property type="entry name" value="RecA"/>
    <property type="match status" value="1"/>
</dbReference>
<dbReference type="Pfam" id="PF21096">
    <property type="entry name" value="RecA_C"/>
    <property type="match status" value="1"/>
</dbReference>
<dbReference type="PRINTS" id="PR00142">
    <property type="entry name" value="RECA"/>
</dbReference>
<dbReference type="SMART" id="SM00382">
    <property type="entry name" value="AAA"/>
    <property type="match status" value="1"/>
</dbReference>
<dbReference type="SUPFAM" id="SSF52540">
    <property type="entry name" value="P-loop containing nucleoside triphosphate hydrolases"/>
    <property type="match status" value="1"/>
</dbReference>
<dbReference type="SUPFAM" id="SSF54752">
    <property type="entry name" value="RecA protein, C-terminal domain"/>
    <property type="match status" value="1"/>
</dbReference>
<dbReference type="PROSITE" id="PS00321">
    <property type="entry name" value="RECA_1"/>
    <property type="match status" value="1"/>
</dbReference>
<dbReference type="PROSITE" id="PS50162">
    <property type="entry name" value="RECA_2"/>
    <property type="match status" value="1"/>
</dbReference>
<dbReference type="PROSITE" id="PS50163">
    <property type="entry name" value="RECA_3"/>
    <property type="match status" value="1"/>
</dbReference>
<name>RECA_FRACC</name>
<protein>
    <recommendedName>
        <fullName evidence="1">Protein RecA</fullName>
    </recommendedName>
    <alternativeName>
        <fullName evidence="1">Recombinase A</fullName>
    </alternativeName>
</protein>
<evidence type="ECO:0000255" key="1">
    <source>
        <dbReference type="HAMAP-Rule" id="MF_00268"/>
    </source>
</evidence>
<organism>
    <name type="scientific">Frankia casuarinae (strain DSM 45818 / CECT 9043 / HFP020203 / CcI3)</name>
    <dbReference type="NCBI Taxonomy" id="106370"/>
    <lineage>
        <taxon>Bacteria</taxon>
        <taxon>Bacillati</taxon>
        <taxon>Actinomycetota</taxon>
        <taxon>Actinomycetes</taxon>
        <taxon>Frankiales</taxon>
        <taxon>Frankiaceae</taxon>
        <taxon>Frankia</taxon>
    </lineage>
</organism>
<comment type="function">
    <text evidence="1">Can catalyze the hydrolysis of ATP in the presence of single-stranded DNA, the ATP-dependent uptake of single-stranded DNA by duplex DNA, and the ATP-dependent hybridization of homologous single-stranded DNAs. It interacts with LexA causing its activation and leading to its autocatalytic cleavage.</text>
</comment>
<comment type="subcellular location">
    <subcellularLocation>
        <location evidence="1">Cytoplasm</location>
    </subcellularLocation>
</comment>
<comment type="similarity">
    <text evidence="1">Belongs to the RecA family.</text>
</comment>
<sequence>MAGLDREKALDNALAQIDKQFGKGSVMRLGDDTRPPVQAIPTGSIALDVALGIGGLPRGRIIEIYGPESSGKTTVALHAVANAQAAGGIAAFIDAEHALDPEYAGKLGVDTDGLLVSQPDTGEQALEIADMLVRSGALDIIVIDSVAALVPRAEIEGEMGDSHVGLQARLMSQALRKMTAALANSGTTAIFINQLREKIGVMFGSPETTTGGKALKFYASVRLDVRRIETLKDGTEAVGNRTRVKVVKNKVAPPFRTAEFDIVYGGGISREGSLIDMGVEHGIIRKSGAWYTYDGDQLGQGKENARSFLRDNPDLANEIEKKIKEKLGILPSLESDAVAPVPVDL</sequence>
<accession>Q2J764</accession>
<feature type="chain" id="PRO_1000059127" description="Protein RecA">
    <location>
        <begin position="1"/>
        <end position="345"/>
    </location>
</feature>
<feature type="binding site" evidence="1">
    <location>
        <begin position="66"/>
        <end position="73"/>
    </location>
    <ligand>
        <name>ATP</name>
        <dbReference type="ChEBI" id="CHEBI:30616"/>
    </ligand>
</feature>